<keyword id="KW-0030">Aminoacyl-tRNA synthetase</keyword>
<keyword id="KW-0067">ATP-binding</keyword>
<keyword id="KW-0963">Cytoplasm</keyword>
<keyword id="KW-0436">Ligase</keyword>
<keyword id="KW-0479">Metal-binding</keyword>
<keyword id="KW-0547">Nucleotide-binding</keyword>
<keyword id="KW-0648">Protein biosynthesis</keyword>
<keyword id="KW-0694">RNA-binding</keyword>
<keyword id="KW-0820">tRNA-binding</keyword>
<keyword id="KW-0862">Zinc</keyword>
<dbReference type="EC" id="6.1.1.10" evidence="1"/>
<dbReference type="EMBL" id="FM178379">
    <property type="protein sequence ID" value="CAQ79910.1"/>
    <property type="molecule type" value="Genomic_DNA"/>
</dbReference>
<dbReference type="RefSeq" id="WP_012550740.1">
    <property type="nucleotide sequence ID" value="NC_011312.1"/>
</dbReference>
<dbReference type="SMR" id="B6EIY5"/>
<dbReference type="KEGG" id="vsa:VSAL_I2226"/>
<dbReference type="eggNOG" id="COG0073">
    <property type="taxonomic scope" value="Bacteria"/>
</dbReference>
<dbReference type="eggNOG" id="COG0143">
    <property type="taxonomic scope" value="Bacteria"/>
</dbReference>
<dbReference type="HOGENOM" id="CLU_009710_7_0_6"/>
<dbReference type="Proteomes" id="UP000001730">
    <property type="component" value="Chromosome 1"/>
</dbReference>
<dbReference type="GO" id="GO:0005829">
    <property type="term" value="C:cytosol"/>
    <property type="evidence" value="ECO:0007669"/>
    <property type="project" value="TreeGrafter"/>
</dbReference>
<dbReference type="GO" id="GO:0005524">
    <property type="term" value="F:ATP binding"/>
    <property type="evidence" value="ECO:0007669"/>
    <property type="project" value="UniProtKB-UniRule"/>
</dbReference>
<dbReference type="GO" id="GO:0046872">
    <property type="term" value="F:metal ion binding"/>
    <property type="evidence" value="ECO:0007669"/>
    <property type="project" value="UniProtKB-KW"/>
</dbReference>
<dbReference type="GO" id="GO:0004825">
    <property type="term" value="F:methionine-tRNA ligase activity"/>
    <property type="evidence" value="ECO:0007669"/>
    <property type="project" value="UniProtKB-UniRule"/>
</dbReference>
<dbReference type="GO" id="GO:0000049">
    <property type="term" value="F:tRNA binding"/>
    <property type="evidence" value="ECO:0007669"/>
    <property type="project" value="UniProtKB-KW"/>
</dbReference>
<dbReference type="GO" id="GO:0006431">
    <property type="term" value="P:methionyl-tRNA aminoacylation"/>
    <property type="evidence" value="ECO:0007669"/>
    <property type="project" value="UniProtKB-UniRule"/>
</dbReference>
<dbReference type="CDD" id="cd07957">
    <property type="entry name" value="Anticodon_Ia_Met"/>
    <property type="match status" value="1"/>
</dbReference>
<dbReference type="CDD" id="cd00814">
    <property type="entry name" value="MetRS_core"/>
    <property type="match status" value="1"/>
</dbReference>
<dbReference type="CDD" id="cd02800">
    <property type="entry name" value="tRNA_bind_EcMetRS_like"/>
    <property type="match status" value="1"/>
</dbReference>
<dbReference type="FunFam" id="1.10.730.10:FF:000005">
    <property type="entry name" value="Methionine--tRNA ligase"/>
    <property type="match status" value="1"/>
</dbReference>
<dbReference type="FunFam" id="2.20.28.20:FF:000001">
    <property type="entry name" value="Methionine--tRNA ligase"/>
    <property type="match status" value="1"/>
</dbReference>
<dbReference type="FunFam" id="2.40.50.140:FF:000042">
    <property type="entry name" value="Methionine--tRNA ligase"/>
    <property type="match status" value="1"/>
</dbReference>
<dbReference type="Gene3D" id="3.40.50.620">
    <property type="entry name" value="HUPs"/>
    <property type="match status" value="1"/>
</dbReference>
<dbReference type="Gene3D" id="1.10.730.10">
    <property type="entry name" value="Isoleucyl-tRNA Synthetase, Domain 1"/>
    <property type="match status" value="1"/>
</dbReference>
<dbReference type="Gene3D" id="2.20.28.20">
    <property type="entry name" value="Methionyl-tRNA synthetase, Zn-domain"/>
    <property type="match status" value="1"/>
</dbReference>
<dbReference type="Gene3D" id="2.40.50.140">
    <property type="entry name" value="Nucleic acid-binding proteins"/>
    <property type="match status" value="1"/>
</dbReference>
<dbReference type="HAMAP" id="MF_00098">
    <property type="entry name" value="Met_tRNA_synth_type1"/>
    <property type="match status" value="1"/>
</dbReference>
<dbReference type="InterPro" id="IPR001412">
    <property type="entry name" value="aa-tRNA-synth_I_CS"/>
</dbReference>
<dbReference type="InterPro" id="IPR041872">
    <property type="entry name" value="Anticodon_Met"/>
</dbReference>
<dbReference type="InterPro" id="IPR004495">
    <property type="entry name" value="Met-tRNA-synth_bsu_C"/>
</dbReference>
<dbReference type="InterPro" id="IPR023458">
    <property type="entry name" value="Met-tRNA_ligase_1"/>
</dbReference>
<dbReference type="InterPro" id="IPR014758">
    <property type="entry name" value="Met-tRNA_synth"/>
</dbReference>
<dbReference type="InterPro" id="IPR015413">
    <property type="entry name" value="Methionyl/Leucyl_tRNA_Synth"/>
</dbReference>
<dbReference type="InterPro" id="IPR033911">
    <property type="entry name" value="MetRS_core"/>
</dbReference>
<dbReference type="InterPro" id="IPR029038">
    <property type="entry name" value="MetRS_Zn"/>
</dbReference>
<dbReference type="InterPro" id="IPR012340">
    <property type="entry name" value="NA-bd_OB-fold"/>
</dbReference>
<dbReference type="InterPro" id="IPR014729">
    <property type="entry name" value="Rossmann-like_a/b/a_fold"/>
</dbReference>
<dbReference type="InterPro" id="IPR002547">
    <property type="entry name" value="tRNA-bd_dom"/>
</dbReference>
<dbReference type="InterPro" id="IPR009080">
    <property type="entry name" value="tRNAsynth_Ia_anticodon-bd"/>
</dbReference>
<dbReference type="NCBIfam" id="TIGR00398">
    <property type="entry name" value="metG"/>
    <property type="match status" value="1"/>
</dbReference>
<dbReference type="NCBIfam" id="TIGR00399">
    <property type="entry name" value="metG_C_term"/>
    <property type="match status" value="1"/>
</dbReference>
<dbReference type="NCBIfam" id="NF001100">
    <property type="entry name" value="PRK00133.1"/>
    <property type="match status" value="1"/>
</dbReference>
<dbReference type="PANTHER" id="PTHR45765">
    <property type="entry name" value="METHIONINE--TRNA LIGASE"/>
    <property type="match status" value="1"/>
</dbReference>
<dbReference type="PANTHER" id="PTHR45765:SF1">
    <property type="entry name" value="METHIONINE--TRNA LIGASE, CYTOPLASMIC"/>
    <property type="match status" value="1"/>
</dbReference>
<dbReference type="Pfam" id="PF19303">
    <property type="entry name" value="Anticodon_3"/>
    <property type="match status" value="1"/>
</dbReference>
<dbReference type="Pfam" id="PF09334">
    <property type="entry name" value="tRNA-synt_1g"/>
    <property type="match status" value="1"/>
</dbReference>
<dbReference type="Pfam" id="PF01588">
    <property type="entry name" value="tRNA_bind"/>
    <property type="match status" value="1"/>
</dbReference>
<dbReference type="PRINTS" id="PR01041">
    <property type="entry name" value="TRNASYNTHMET"/>
</dbReference>
<dbReference type="SUPFAM" id="SSF47323">
    <property type="entry name" value="Anticodon-binding domain of a subclass of class I aminoacyl-tRNA synthetases"/>
    <property type="match status" value="1"/>
</dbReference>
<dbReference type="SUPFAM" id="SSF57770">
    <property type="entry name" value="Methionyl-tRNA synthetase (MetRS), Zn-domain"/>
    <property type="match status" value="1"/>
</dbReference>
<dbReference type="SUPFAM" id="SSF50249">
    <property type="entry name" value="Nucleic acid-binding proteins"/>
    <property type="match status" value="1"/>
</dbReference>
<dbReference type="SUPFAM" id="SSF52374">
    <property type="entry name" value="Nucleotidylyl transferase"/>
    <property type="match status" value="1"/>
</dbReference>
<dbReference type="PROSITE" id="PS00178">
    <property type="entry name" value="AA_TRNA_LIGASE_I"/>
    <property type="match status" value="1"/>
</dbReference>
<dbReference type="PROSITE" id="PS50886">
    <property type="entry name" value="TRBD"/>
    <property type="match status" value="1"/>
</dbReference>
<proteinExistence type="inferred from homology"/>
<name>SYM_ALISL</name>
<sequence>MATDPRKILVTCALPYANGSIHLGHMLEHIQADIWVRYQRLRGNDINFICADDAHGTPIMLKAQQMGITPEEMIAAVSEEHQKDFAGFDISFDNYHSTHSDENRELASSIYLELKKNGFITSRTISQLFDPEKEMFLPDRFVKGTCPKCKSEEQYGDNCDNCGETYSPTDLINPKSAVSGATPVMKDSEHFFFDLPQFESMLKEWTRSGSLQTETANKMQEWFESGLQQWDISRDAPYFGFEIPGETNKFFYVWLDAPIGYMGSFKNLCDKRDDLDFDEYWKLNSTTELYHFIGKDIVYFHSLFWPAMLDGAGFRKPNNVFVHGYVTVNGAKMSKSKGTFIKAGTYLNHLDPECLRYYYAAKLNSRIDDIDLNLEDFTQRVNSDVVNKIVNLASRNAGFITKRFDGKLSDNFVAPELYNEFVAASDRIAELYETREFSRAIREITALADKANQYIDEKAPWVLAKEEGKEQELQEVASVGINLFRVLMAYLKPVMPELAARTEAFLNETLTWECIAQPLTSHEITKFKALFNRIDPKKVEAMVEESKEDAAIEMAAKEKAEAEKEKANQTELDKEPIADEIEFDAFEAVDMRIARIISCEEIPKANKLLKFQLDIGGETRQVFSGIKSAYTPEELVGKHTVMVANLKPRKMKFGMSEGMILAAGPGGKDLWILEPHEGAQPGMRVM</sequence>
<reference key="1">
    <citation type="journal article" date="2008" name="BMC Genomics">
        <title>The genome sequence of the fish pathogen Aliivibrio salmonicida strain LFI1238 shows extensive evidence of gene decay.</title>
        <authorList>
            <person name="Hjerde E."/>
            <person name="Lorentzen M.S."/>
            <person name="Holden M.T."/>
            <person name="Seeger K."/>
            <person name="Paulsen S."/>
            <person name="Bason N."/>
            <person name="Churcher C."/>
            <person name="Harris D."/>
            <person name="Norbertczak H."/>
            <person name="Quail M.A."/>
            <person name="Sanders S."/>
            <person name="Thurston S."/>
            <person name="Parkhill J."/>
            <person name="Willassen N.P."/>
            <person name="Thomson N.R."/>
        </authorList>
    </citation>
    <scope>NUCLEOTIDE SEQUENCE [LARGE SCALE GENOMIC DNA]</scope>
    <source>
        <strain>LFI1238</strain>
    </source>
</reference>
<gene>
    <name evidence="1" type="primary">metG</name>
    <name type="ordered locus">VSAL_I2226</name>
</gene>
<organism>
    <name type="scientific">Aliivibrio salmonicida (strain LFI1238)</name>
    <name type="common">Vibrio salmonicida (strain LFI1238)</name>
    <dbReference type="NCBI Taxonomy" id="316275"/>
    <lineage>
        <taxon>Bacteria</taxon>
        <taxon>Pseudomonadati</taxon>
        <taxon>Pseudomonadota</taxon>
        <taxon>Gammaproteobacteria</taxon>
        <taxon>Vibrionales</taxon>
        <taxon>Vibrionaceae</taxon>
        <taxon>Aliivibrio</taxon>
    </lineage>
</organism>
<feature type="chain" id="PRO_1000093695" description="Methionine--tRNA ligase">
    <location>
        <begin position="1"/>
        <end position="686"/>
    </location>
</feature>
<feature type="domain" description="tRNA-binding" evidence="1">
    <location>
        <begin position="585"/>
        <end position="686"/>
    </location>
</feature>
<feature type="short sequence motif" description="'HIGH' region">
    <location>
        <begin position="15"/>
        <end position="25"/>
    </location>
</feature>
<feature type="short sequence motif" description="'KMSKS' region">
    <location>
        <begin position="332"/>
        <end position="336"/>
    </location>
</feature>
<feature type="binding site" evidence="1">
    <location>
        <position position="146"/>
    </location>
    <ligand>
        <name>Zn(2+)</name>
        <dbReference type="ChEBI" id="CHEBI:29105"/>
    </ligand>
</feature>
<feature type="binding site" evidence="1">
    <location>
        <position position="149"/>
    </location>
    <ligand>
        <name>Zn(2+)</name>
        <dbReference type="ChEBI" id="CHEBI:29105"/>
    </ligand>
</feature>
<feature type="binding site" evidence="1">
    <location>
        <position position="159"/>
    </location>
    <ligand>
        <name>Zn(2+)</name>
        <dbReference type="ChEBI" id="CHEBI:29105"/>
    </ligand>
</feature>
<feature type="binding site" evidence="1">
    <location>
        <position position="162"/>
    </location>
    <ligand>
        <name>Zn(2+)</name>
        <dbReference type="ChEBI" id="CHEBI:29105"/>
    </ligand>
</feature>
<feature type="binding site" evidence="1">
    <location>
        <position position="335"/>
    </location>
    <ligand>
        <name>ATP</name>
        <dbReference type="ChEBI" id="CHEBI:30616"/>
    </ligand>
</feature>
<comment type="function">
    <text evidence="1">Is required not only for elongation of protein synthesis but also for the initiation of all mRNA translation through initiator tRNA(fMet) aminoacylation.</text>
</comment>
<comment type="catalytic activity">
    <reaction evidence="1">
        <text>tRNA(Met) + L-methionine + ATP = L-methionyl-tRNA(Met) + AMP + diphosphate</text>
        <dbReference type="Rhea" id="RHEA:13481"/>
        <dbReference type="Rhea" id="RHEA-COMP:9667"/>
        <dbReference type="Rhea" id="RHEA-COMP:9698"/>
        <dbReference type="ChEBI" id="CHEBI:30616"/>
        <dbReference type="ChEBI" id="CHEBI:33019"/>
        <dbReference type="ChEBI" id="CHEBI:57844"/>
        <dbReference type="ChEBI" id="CHEBI:78442"/>
        <dbReference type="ChEBI" id="CHEBI:78530"/>
        <dbReference type="ChEBI" id="CHEBI:456215"/>
        <dbReference type="EC" id="6.1.1.10"/>
    </reaction>
</comment>
<comment type="cofactor">
    <cofactor evidence="1">
        <name>Zn(2+)</name>
        <dbReference type="ChEBI" id="CHEBI:29105"/>
    </cofactor>
    <text evidence="1">Binds 1 zinc ion per subunit.</text>
</comment>
<comment type="subunit">
    <text evidence="1">Homodimer.</text>
</comment>
<comment type="subcellular location">
    <subcellularLocation>
        <location evidence="1">Cytoplasm</location>
    </subcellularLocation>
</comment>
<comment type="similarity">
    <text evidence="1">Belongs to the class-I aminoacyl-tRNA synthetase family. MetG type 1 subfamily.</text>
</comment>
<protein>
    <recommendedName>
        <fullName evidence="1">Methionine--tRNA ligase</fullName>
        <ecNumber evidence="1">6.1.1.10</ecNumber>
    </recommendedName>
    <alternativeName>
        <fullName evidence="1">Methionyl-tRNA synthetase</fullName>
        <shortName evidence="1">MetRS</shortName>
    </alternativeName>
</protein>
<accession>B6EIY5</accession>
<evidence type="ECO:0000255" key="1">
    <source>
        <dbReference type="HAMAP-Rule" id="MF_00098"/>
    </source>
</evidence>